<sequence length="75" mass="8231">MPQLSRYSDEHVEQLLSELLSVLEKHKAPTDLSLMVLGNMVTNLINTSVAPAQRQAIANSFARALQSSISEDNAH</sequence>
<accession>A9N6F2</accession>
<feature type="chain" id="PRO_1000083820" description="UPF0352 protein YejL">
    <location>
        <begin position="1"/>
        <end position="75"/>
    </location>
</feature>
<proteinExistence type="inferred from homology"/>
<comment type="similarity">
    <text evidence="1">Belongs to the UPF0352 family.</text>
</comment>
<dbReference type="EMBL" id="CP000886">
    <property type="protein sequence ID" value="ABX66196.1"/>
    <property type="molecule type" value="Genomic_DNA"/>
</dbReference>
<dbReference type="RefSeq" id="WP_001135904.1">
    <property type="nucleotide sequence ID" value="NC_010102.1"/>
</dbReference>
<dbReference type="SMR" id="A9N6F2"/>
<dbReference type="KEGG" id="spq:SPAB_00772"/>
<dbReference type="PATRIC" id="fig|1016998.12.peg.724"/>
<dbReference type="HOGENOM" id="CLU_175457_0_0_6"/>
<dbReference type="BioCyc" id="SENT1016998:SPAB_RS03205-MONOMER"/>
<dbReference type="Proteomes" id="UP000008556">
    <property type="component" value="Chromosome"/>
</dbReference>
<dbReference type="Gene3D" id="1.10.3390.10">
    <property type="entry name" value="YejL-like"/>
    <property type="match status" value="1"/>
</dbReference>
<dbReference type="HAMAP" id="MF_00816">
    <property type="entry name" value="UPF0352"/>
    <property type="match status" value="1"/>
</dbReference>
<dbReference type="InterPro" id="IPR009857">
    <property type="entry name" value="UPF0352"/>
</dbReference>
<dbReference type="InterPro" id="IPR023202">
    <property type="entry name" value="YejL_sf"/>
</dbReference>
<dbReference type="NCBIfam" id="NF010242">
    <property type="entry name" value="PRK13689.1"/>
    <property type="match status" value="1"/>
</dbReference>
<dbReference type="Pfam" id="PF07208">
    <property type="entry name" value="DUF1414"/>
    <property type="match status" value="1"/>
</dbReference>
<dbReference type="PIRSF" id="PIRSF006188">
    <property type="entry name" value="UCP006188"/>
    <property type="match status" value="1"/>
</dbReference>
<dbReference type="SUPFAM" id="SSF158651">
    <property type="entry name" value="YejL-like"/>
    <property type="match status" value="1"/>
</dbReference>
<organism>
    <name type="scientific">Salmonella paratyphi B (strain ATCC BAA-1250 / SPB7)</name>
    <dbReference type="NCBI Taxonomy" id="1016998"/>
    <lineage>
        <taxon>Bacteria</taxon>
        <taxon>Pseudomonadati</taxon>
        <taxon>Pseudomonadota</taxon>
        <taxon>Gammaproteobacteria</taxon>
        <taxon>Enterobacterales</taxon>
        <taxon>Enterobacteriaceae</taxon>
        <taxon>Salmonella</taxon>
    </lineage>
</organism>
<protein>
    <recommendedName>
        <fullName evidence="1">UPF0352 protein YejL</fullName>
    </recommendedName>
</protein>
<gene>
    <name evidence="1" type="primary">yejL</name>
    <name type="ordered locus">SPAB_00772</name>
</gene>
<evidence type="ECO:0000255" key="1">
    <source>
        <dbReference type="HAMAP-Rule" id="MF_00816"/>
    </source>
</evidence>
<reference key="1">
    <citation type="submission" date="2007-11" db="EMBL/GenBank/DDBJ databases">
        <authorList>
            <consortium name="The Salmonella enterica serovar Paratyphi B Genome Sequencing Project"/>
            <person name="McClelland M."/>
            <person name="Sanderson E.K."/>
            <person name="Porwollik S."/>
            <person name="Spieth J."/>
            <person name="Clifton W.S."/>
            <person name="Fulton R."/>
            <person name="Cordes M."/>
            <person name="Wollam A."/>
            <person name="Shah N."/>
            <person name="Pepin K."/>
            <person name="Bhonagiri V."/>
            <person name="Nash W."/>
            <person name="Johnson M."/>
            <person name="Thiruvilangam P."/>
            <person name="Wilson R."/>
        </authorList>
    </citation>
    <scope>NUCLEOTIDE SEQUENCE [LARGE SCALE GENOMIC DNA]</scope>
    <source>
        <strain>ATCC BAA-1250 / SPB7</strain>
    </source>
</reference>
<name>YEJL_SALPB</name>